<feature type="chain" id="PRO_1000006894" description="Phenylalanine--tRNA ligase alpha subunit">
    <location>
        <begin position="1"/>
        <end position="327"/>
    </location>
</feature>
<feature type="binding site" evidence="1">
    <location>
        <position position="252"/>
    </location>
    <ligand>
        <name>Mg(2+)</name>
        <dbReference type="ChEBI" id="CHEBI:18420"/>
        <note>shared with beta subunit</note>
    </ligand>
</feature>
<protein>
    <recommendedName>
        <fullName evidence="1">Phenylalanine--tRNA ligase alpha subunit</fullName>
        <ecNumber evidence="1">6.1.1.20</ecNumber>
    </recommendedName>
    <alternativeName>
        <fullName evidence="1">Phenylalanyl-tRNA synthetase alpha subunit</fullName>
        <shortName evidence="1">PheRS</shortName>
    </alternativeName>
</protein>
<organism>
    <name type="scientific">Shewanella baltica (strain OS185)</name>
    <dbReference type="NCBI Taxonomy" id="402882"/>
    <lineage>
        <taxon>Bacteria</taxon>
        <taxon>Pseudomonadati</taxon>
        <taxon>Pseudomonadota</taxon>
        <taxon>Gammaproteobacteria</taxon>
        <taxon>Alteromonadales</taxon>
        <taxon>Shewanellaceae</taxon>
        <taxon>Shewanella</taxon>
    </lineage>
</organism>
<keyword id="KW-0030">Aminoacyl-tRNA synthetase</keyword>
<keyword id="KW-0067">ATP-binding</keyword>
<keyword id="KW-0963">Cytoplasm</keyword>
<keyword id="KW-0436">Ligase</keyword>
<keyword id="KW-0460">Magnesium</keyword>
<keyword id="KW-0479">Metal-binding</keyword>
<keyword id="KW-0547">Nucleotide-binding</keyword>
<keyword id="KW-0648">Protein biosynthesis</keyword>
<accession>A6WMK4</accession>
<gene>
    <name evidence="1" type="primary">pheS</name>
    <name type="ordered locus">Shew185_1900</name>
</gene>
<evidence type="ECO:0000255" key="1">
    <source>
        <dbReference type="HAMAP-Rule" id="MF_00281"/>
    </source>
</evidence>
<name>SYFA_SHEB8</name>
<proteinExistence type="inferred from homology"/>
<comment type="catalytic activity">
    <reaction evidence="1">
        <text>tRNA(Phe) + L-phenylalanine + ATP = L-phenylalanyl-tRNA(Phe) + AMP + diphosphate + H(+)</text>
        <dbReference type="Rhea" id="RHEA:19413"/>
        <dbReference type="Rhea" id="RHEA-COMP:9668"/>
        <dbReference type="Rhea" id="RHEA-COMP:9699"/>
        <dbReference type="ChEBI" id="CHEBI:15378"/>
        <dbReference type="ChEBI" id="CHEBI:30616"/>
        <dbReference type="ChEBI" id="CHEBI:33019"/>
        <dbReference type="ChEBI" id="CHEBI:58095"/>
        <dbReference type="ChEBI" id="CHEBI:78442"/>
        <dbReference type="ChEBI" id="CHEBI:78531"/>
        <dbReference type="ChEBI" id="CHEBI:456215"/>
        <dbReference type="EC" id="6.1.1.20"/>
    </reaction>
</comment>
<comment type="cofactor">
    <cofactor evidence="1">
        <name>Mg(2+)</name>
        <dbReference type="ChEBI" id="CHEBI:18420"/>
    </cofactor>
    <text evidence="1">Binds 2 magnesium ions per tetramer.</text>
</comment>
<comment type="subunit">
    <text evidence="1">Tetramer of two alpha and two beta subunits.</text>
</comment>
<comment type="subcellular location">
    <subcellularLocation>
        <location evidence="1">Cytoplasm</location>
    </subcellularLocation>
</comment>
<comment type="similarity">
    <text evidence="1">Belongs to the class-II aminoacyl-tRNA synthetase family. Phe-tRNA synthetase alpha subunit type 1 subfamily.</text>
</comment>
<sequence length="327" mass="37383">MQQLTEIVEQALVIIDQASDLKALDDIRVDYLGKKGKITDMMKMMGSLSPEEKPAFGQAVNDAKQAIQQKLTERIDGLKSSELEAKLIAEKIDVTLPGRTQEIGGLHPVTRTIERIETFFGELGFSVKQGPEIEDDFHNFDALNISEHHPARADHDTFYFNPKLMLRTQTSGVQIRTMETEKPPLRIISPGRVYRNDYDQTHTPMFHQVEGLLVDEHVNFAELKGILHDFLRNFFEEDLQVRFRPSYFPFTEPSAEVDVMGKNGKWLEVLGCGMVHPNVLRSVGIDPEKYSGFAFGMGVERLTMLRYGVNDLRAFFENDLRFLKQFK</sequence>
<dbReference type="EC" id="6.1.1.20" evidence="1"/>
<dbReference type="EMBL" id="CP000753">
    <property type="protein sequence ID" value="ABS08043.1"/>
    <property type="molecule type" value="Genomic_DNA"/>
</dbReference>
<dbReference type="RefSeq" id="WP_006081368.1">
    <property type="nucleotide sequence ID" value="NC_009665.1"/>
</dbReference>
<dbReference type="SMR" id="A6WMK4"/>
<dbReference type="GeneID" id="11772111"/>
<dbReference type="KEGG" id="sbm:Shew185_1900"/>
<dbReference type="HOGENOM" id="CLU_025086_0_1_6"/>
<dbReference type="GO" id="GO:0005737">
    <property type="term" value="C:cytoplasm"/>
    <property type="evidence" value="ECO:0007669"/>
    <property type="project" value="UniProtKB-SubCell"/>
</dbReference>
<dbReference type="GO" id="GO:0005524">
    <property type="term" value="F:ATP binding"/>
    <property type="evidence" value="ECO:0007669"/>
    <property type="project" value="UniProtKB-UniRule"/>
</dbReference>
<dbReference type="GO" id="GO:0000287">
    <property type="term" value="F:magnesium ion binding"/>
    <property type="evidence" value="ECO:0007669"/>
    <property type="project" value="UniProtKB-UniRule"/>
</dbReference>
<dbReference type="GO" id="GO:0004826">
    <property type="term" value="F:phenylalanine-tRNA ligase activity"/>
    <property type="evidence" value="ECO:0007669"/>
    <property type="project" value="UniProtKB-UniRule"/>
</dbReference>
<dbReference type="GO" id="GO:0000049">
    <property type="term" value="F:tRNA binding"/>
    <property type="evidence" value="ECO:0007669"/>
    <property type="project" value="InterPro"/>
</dbReference>
<dbReference type="GO" id="GO:0006432">
    <property type="term" value="P:phenylalanyl-tRNA aminoacylation"/>
    <property type="evidence" value="ECO:0007669"/>
    <property type="project" value="UniProtKB-UniRule"/>
</dbReference>
<dbReference type="CDD" id="cd00496">
    <property type="entry name" value="PheRS_alpha_core"/>
    <property type="match status" value="1"/>
</dbReference>
<dbReference type="FunFam" id="3.30.930.10:FF:000003">
    <property type="entry name" value="Phenylalanine--tRNA ligase alpha subunit"/>
    <property type="match status" value="1"/>
</dbReference>
<dbReference type="Gene3D" id="3.30.930.10">
    <property type="entry name" value="Bira Bifunctional Protein, Domain 2"/>
    <property type="match status" value="1"/>
</dbReference>
<dbReference type="HAMAP" id="MF_00281">
    <property type="entry name" value="Phe_tRNA_synth_alpha1"/>
    <property type="match status" value="1"/>
</dbReference>
<dbReference type="InterPro" id="IPR006195">
    <property type="entry name" value="aa-tRNA-synth_II"/>
</dbReference>
<dbReference type="InterPro" id="IPR045864">
    <property type="entry name" value="aa-tRNA-synth_II/BPL/LPL"/>
</dbReference>
<dbReference type="InterPro" id="IPR004529">
    <property type="entry name" value="Phe-tRNA-synth_IIc_asu"/>
</dbReference>
<dbReference type="InterPro" id="IPR004188">
    <property type="entry name" value="Phe-tRNA_ligase_II_N"/>
</dbReference>
<dbReference type="InterPro" id="IPR022911">
    <property type="entry name" value="Phe_tRNA_ligase_alpha1_bac"/>
</dbReference>
<dbReference type="InterPro" id="IPR002319">
    <property type="entry name" value="Phenylalanyl-tRNA_Synthase"/>
</dbReference>
<dbReference type="InterPro" id="IPR010978">
    <property type="entry name" value="tRNA-bd_arm"/>
</dbReference>
<dbReference type="NCBIfam" id="TIGR00468">
    <property type="entry name" value="pheS"/>
    <property type="match status" value="1"/>
</dbReference>
<dbReference type="PANTHER" id="PTHR11538:SF41">
    <property type="entry name" value="PHENYLALANINE--TRNA LIGASE, MITOCHONDRIAL"/>
    <property type="match status" value="1"/>
</dbReference>
<dbReference type="PANTHER" id="PTHR11538">
    <property type="entry name" value="PHENYLALANYL-TRNA SYNTHETASE"/>
    <property type="match status" value="1"/>
</dbReference>
<dbReference type="Pfam" id="PF02912">
    <property type="entry name" value="Phe_tRNA-synt_N"/>
    <property type="match status" value="1"/>
</dbReference>
<dbReference type="Pfam" id="PF01409">
    <property type="entry name" value="tRNA-synt_2d"/>
    <property type="match status" value="1"/>
</dbReference>
<dbReference type="SUPFAM" id="SSF55681">
    <property type="entry name" value="Class II aaRS and biotin synthetases"/>
    <property type="match status" value="1"/>
</dbReference>
<dbReference type="SUPFAM" id="SSF46589">
    <property type="entry name" value="tRNA-binding arm"/>
    <property type="match status" value="1"/>
</dbReference>
<dbReference type="PROSITE" id="PS50862">
    <property type="entry name" value="AA_TRNA_LIGASE_II"/>
    <property type="match status" value="1"/>
</dbReference>
<reference key="1">
    <citation type="submission" date="2007-07" db="EMBL/GenBank/DDBJ databases">
        <title>Complete sequence of chromosome of Shewanella baltica OS185.</title>
        <authorList>
            <consortium name="US DOE Joint Genome Institute"/>
            <person name="Copeland A."/>
            <person name="Lucas S."/>
            <person name="Lapidus A."/>
            <person name="Barry K."/>
            <person name="Glavina del Rio T."/>
            <person name="Dalin E."/>
            <person name="Tice H."/>
            <person name="Pitluck S."/>
            <person name="Sims D."/>
            <person name="Brettin T."/>
            <person name="Bruce D."/>
            <person name="Detter J.C."/>
            <person name="Han C."/>
            <person name="Schmutz J."/>
            <person name="Larimer F."/>
            <person name="Land M."/>
            <person name="Hauser L."/>
            <person name="Kyrpides N."/>
            <person name="Mikhailova N."/>
            <person name="Brettar I."/>
            <person name="Rodrigues J."/>
            <person name="Konstantinidis K."/>
            <person name="Tiedje J."/>
            <person name="Richardson P."/>
        </authorList>
    </citation>
    <scope>NUCLEOTIDE SEQUENCE [LARGE SCALE GENOMIC DNA]</scope>
    <source>
        <strain>OS185</strain>
    </source>
</reference>